<keyword id="KW-0378">Hydrolase</keyword>
<evidence type="ECO:0000255" key="1">
    <source>
        <dbReference type="HAMAP-Rule" id="MF_01212"/>
    </source>
</evidence>
<evidence type="ECO:0000255" key="2">
    <source>
        <dbReference type="PROSITE-ProRule" id="PRU01175"/>
    </source>
</evidence>
<evidence type="ECO:0000256" key="3">
    <source>
        <dbReference type="SAM" id="MobiDB-lite"/>
    </source>
</evidence>
<name>DGTL1_MYCBP</name>
<sequence>MSASEHDPYDDFDRQRRVAEAPKTAGLPGTEGQYRSDFARDRARVLHSAALRRLADKTQVVGPREGDTPRTRLTHSLEVAQIGRGMAIGLGCDLDLVELAGLAHDIGHPPYGHNGERALDEVAASHGGFEGNAQNFRILTSLEPKVVDAQGLSAGLNLTRASLDAVTKYPWMRGDGLGSQRRKFGFYDDDRESAVWVRQGAPPERACLEAQVMDWADDVAYSVHDVEDGVVSERIDLRVLAAEEDAAALARLGEREFSRVSADELMAAARRLSRLPVVAAVGKYDATLSASVALKRLTSELVGRFASAAIATTRAAAGPGPLVRFRADLQVPDLVRAEVAVLKILALQFIMSDPRHLETQARQRERIHRVAHRLYSGAPQTLDPVYAAAFNTAADDAARLRVVVDQIASYTEGRLERIDADQLGVSRNALD</sequence>
<accession>A1KL43</accession>
<protein>
    <recommendedName>
        <fullName evidence="1">Deoxyguanosinetriphosphate triphosphohydrolase-like protein</fullName>
    </recommendedName>
</protein>
<reference key="1">
    <citation type="journal article" date="2007" name="Proc. Natl. Acad. Sci. U.S.A.">
        <title>Genome plasticity of BCG and impact on vaccine efficacy.</title>
        <authorList>
            <person name="Brosch R."/>
            <person name="Gordon S.V."/>
            <person name="Garnier T."/>
            <person name="Eiglmeier K."/>
            <person name="Frigui W."/>
            <person name="Valenti P."/>
            <person name="Dos Santos S."/>
            <person name="Duthoy S."/>
            <person name="Lacroix C."/>
            <person name="Garcia-Pelayo C."/>
            <person name="Inwald J.K."/>
            <person name="Golby P."/>
            <person name="Garcia J.N."/>
            <person name="Hewinson R.G."/>
            <person name="Behr M.A."/>
            <person name="Quail M.A."/>
            <person name="Churcher C."/>
            <person name="Barrell B.G."/>
            <person name="Parkhill J."/>
            <person name="Cole S.T."/>
        </authorList>
    </citation>
    <scope>NUCLEOTIDE SEQUENCE [LARGE SCALE GENOMIC DNA]</scope>
    <source>
        <strain>BCG / Pasteur 1173P2</strain>
    </source>
</reference>
<gene>
    <name type="ordered locus">BCG_2367c</name>
</gene>
<comment type="similarity">
    <text evidence="1">Belongs to the dGTPase family. Type 2 subfamily.</text>
</comment>
<dbReference type="EMBL" id="AM408590">
    <property type="protein sequence ID" value="CAL72355.1"/>
    <property type="molecule type" value="Genomic_DNA"/>
</dbReference>
<dbReference type="RefSeq" id="WP_003899281.1">
    <property type="nucleotide sequence ID" value="NC_008769.1"/>
</dbReference>
<dbReference type="SMR" id="A1KL43"/>
<dbReference type="KEGG" id="mbb:BCG_2367c"/>
<dbReference type="HOGENOM" id="CLU_028163_0_1_11"/>
<dbReference type="Proteomes" id="UP000001472">
    <property type="component" value="Chromosome"/>
</dbReference>
<dbReference type="GO" id="GO:0008832">
    <property type="term" value="F:dGTPase activity"/>
    <property type="evidence" value="ECO:0007669"/>
    <property type="project" value="TreeGrafter"/>
</dbReference>
<dbReference type="GO" id="GO:0006203">
    <property type="term" value="P:dGTP catabolic process"/>
    <property type="evidence" value="ECO:0007669"/>
    <property type="project" value="TreeGrafter"/>
</dbReference>
<dbReference type="CDD" id="cd00077">
    <property type="entry name" value="HDc"/>
    <property type="match status" value="1"/>
</dbReference>
<dbReference type="FunFam" id="1.10.3210.10:FF:000029">
    <property type="entry name" value="Deoxyguanosinetriphosphate triphosphohydrolase-like protein"/>
    <property type="match status" value="1"/>
</dbReference>
<dbReference type="Gene3D" id="1.10.3210.10">
    <property type="entry name" value="Hypothetical protein af1432"/>
    <property type="match status" value="1"/>
</dbReference>
<dbReference type="HAMAP" id="MF_01212">
    <property type="entry name" value="dGTPase_type2"/>
    <property type="match status" value="1"/>
</dbReference>
<dbReference type="InterPro" id="IPR006261">
    <property type="entry name" value="dGTPase"/>
</dbReference>
<dbReference type="InterPro" id="IPR050135">
    <property type="entry name" value="dGTPase-like"/>
</dbReference>
<dbReference type="InterPro" id="IPR023023">
    <property type="entry name" value="dNTPase_2"/>
</dbReference>
<dbReference type="InterPro" id="IPR003607">
    <property type="entry name" value="HD/PDEase_dom"/>
</dbReference>
<dbReference type="InterPro" id="IPR006674">
    <property type="entry name" value="HD_domain"/>
</dbReference>
<dbReference type="InterPro" id="IPR026875">
    <property type="entry name" value="PHydrolase_assoc_dom"/>
</dbReference>
<dbReference type="NCBIfam" id="TIGR01353">
    <property type="entry name" value="dGTP_triPase"/>
    <property type="match status" value="1"/>
</dbReference>
<dbReference type="NCBIfam" id="NF002829">
    <property type="entry name" value="PRK03007.1"/>
    <property type="match status" value="1"/>
</dbReference>
<dbReference type="PANTHER" id="PTHR11373:SF32">
    <property type="entry name" value="DEOXYGUANOSINETRIPHOSPHATE TRIPHOSPHOHYDROLASE"/>
    <property type="match status" value="1"/>
</dbReference>
<dbReference type="PANTHER" id="PTHR11373">
    <property type="entry name" value="DEOXYNUCLEOSIDE TRIPHOSPHATE TRIPHOSPHOHYDROLASE"/>
    <property type="match status" value="1"/>
</dbReference>
<dbReference type="Pfam" id="PF01966">
    <property type="entry name" value="HD"/>
    <property type="match status" value="1"/>
</dbReference>
<dbReference type="Pfam" id="PF13286">
    <property type="entry name" value="HD_assoc"/>
    <property type="match status" value="1"/>
</dbReference>
<dbReference type="SMART" id="SM00471">
    <property type="entry name" value="HDc"/>
    <property type="match status" value="1"/>
</dbReference>
<dbReference type="SUPFAM" id="SSF109604">
    <property type="entry name" value="HD-domain/PDEase-like"/>
    <property type="match status" value="1"/>
</dbReference>
<dbReference type="PROSITE" id="PS51831">
    <property type="entry name" value="HD"/>
    <property type="match status" value="1"/>
</dbReference>
<feature type="chain" id="PRO_1000066421" description="Deoxyguanosinetriphosphate triphosphohydrolase-like protein">
    <location>
        <begin position="1"/>
        <end position="431"/>
    </location>
</feature>
<feature type="domain" description="HD" evidence="2">
    <location>
        <begin position="72"/>
        <end position="222"/>
    </location>
</feature>
<feature type="region of interest" description="Disordered" evidence="3">
    <location>
        <begin position="1"/>
        <end position="36"/>
    </location>
</feature>
<feature type="compositionally biased region" description="Basic and acidic residues" evidence="3">
    <location>
        <begin position="1"/>
        <end position="20"/>
    </location>
</feature>
<proteinExistence type="inferred from homology"/>
<organism>
    <name type="scientific">Mycobacterium bovis (strain BCG / Pasteur 1173P2)</name>
    <dbReference type="NCBI Taxonomy" id="410289"/>
    <lineage>
        <taxon>Bacteria</taxon>
        <taxon>Bacillati</taxon>
        <taxon>Actinomycetota</taxon>
        <taxon>Actinomycetes</taxon>
        <taxon>Mycobacteriales</taxon>
        <taxon>Mycobacteriaceae</taxon>
        <taxon>Mycobacterium</taxon>
        <taxon>Mycobacterium tuberculosis complex</taxon>
    </lineage>
</organism>